<reference key="1">
    <citation type="journal article" date="1999" name="Biochem. Biophys. Res. Commun.">
        <title>Eukaryotic initiation factor 4B from wheat and Arabidopsis thaliana is a member of a multigene family.</title>
        <authorList>
            <person name="Metz A.M."/>
            <person name="Wong K.C."/>
            <person name="Malmstrom S.A."/>
            <person name="Browning K.S."/>
        </authorList>
    </citation>
    <scope>NUCLEOTIDE SEQUENCE [GENOMIC DNA / MRNA]</scope>
    <scope>FUNCTION</scope>
    <scope>HOMODIMERIZATION</scope>
    <scope>GENE FAMILY</scope>
    <scope>NOMENCLATURE</scope>
    <source>
        <strain>cv. Chinese Spring</strain>
    </source>
</reference>
<reference key="2">
    <citation type="journal article" date="2009" name="Plant Physiol.">
        <title>Evidence for variation in the optimal translation initiation complex: plant eIF4B, eIF4F, and eIF(iso)4F differentially promote translation of mRNAs.</title>
        <authorList>
            <person name="Mayberry L.K."/>
            <person name="Allen M.L."/>
            <person name="Dennis M.D."/>
            <person name="Browning K.S."/>
        </authorList>
    </citation>
    <scope>FUNCTION</scope>
    <scope>SUBUNIT</scope>
</reference>
<sequence length="527" mass="56828">MAKPWGGVGAWALDAEREDEEREHAAAFPAPDPPAAAGGAASFPSLKEAVVAGGGKQKKKKGTTLSLSEFTTYGAAGAPRRVAPAEPKGLTPQEMMMLPTGPRERSEDELDRSRGFRSYGGDREPRGGGFDDDRRSSRDSDLDMPSRADESDNWGKNKSFSPAPTDSGRRDRLSGPSPLGRSDDIDNWSRDKKPLPSRYPSLGTGGGFRESSGGGFRESSGGGFRESSGGGFRDSPGPSDSDRWVRGAVPAPMTNNGDRPRLNLNPPKRDPSATPVPAAEVARSRPSPFGAAKPREEVLAEKGLDWRKMEGEIEKKTSRPTSSHSSRPNSAHSSRPGSPGSQVSAVGSEGAPRARPKVNPFGDAKPREVVLQEKGKDWRKIDLELEHRAVNRPESEEEKNLKEEINLLKVDLKEIEAIAGDGSEQAKEVSEKISQMEKQLDLLTVELDDKIRFGQRPSSGAGRAAAFPPASEEPHVAVAHMDRPRSRGGVETYPKPVEERWGFHGSRERGSFGGGGSSDRSSTRQGW</sequence>
<feature type="chain" id="PRO_0000434273" description="Eukaryotic translation initiation factor 4B1">
    <location>
        <begin position="1"/>
        <end position="527"/>
    </location>
</feature>
<feature type="region of interest" description="Disordered" evidence="3">
    <location>
        <begin position="1"/>
        <end position="370"/>
    </location>
</feature>
<feature type="region of interest" description="Disordered" evidence="3">
    <location>
        <begin position="453"/>
        <end position="527"/>
    </location>
</feature>
<feature type="short sequence motif" description="Nuclear localization signal" evidence="2">
    <location>
        <begin position="196"/>
        <end position="203"/>
    </location>
</feature>
<feature type="compositionally biased region" description="Low complexity" evidence="3">
    <location>
        <begin position="35"/>
        <end position="45"/>
    </location>
</feature>
<feature type="compositionally biased region" description="Low complexity" evidence="3">
    <location>
        <begin position="74"/>
        <end position="85"/>
    </location>
</feature>
<feature type="compositionally biased region" description="Basic and acidic residues" evidence="3">
    <location>
        <begin position="102"/>
        <end position="155"/>
    </location>
</feature>
<feature type="compositionally biased region" description="Basic and acidic residues" evidence="3">
    <location>
        <begin position="181"/>
        <end position="194"/>
    </location>
</feature>
<feature type="compositionally biased region" description="Gly residues" evidence="3">
    <location>
        <begin position="203"/>
        <end position="232"/>
    </location>
</feature>
<feature type="compositionally biased region" description="Basic and acidic residues" evidence="3">
    <location>
        <begin position="293"/>
        <end position="317"/>
    </location>
</feature>
<feature type="compositionally biased region" description="Low complexity" evidence="3">
    <location>
        <begin position="319"/>
        <end position="336"/>
    </location>
</feature>
<feature type="compositionally biased region" description="Basic and acidic residues" evidence="3">
    <location>
        <begin position="472"/>
        <end position="485"/>
    </location>
</feature>
<feature type="compositionally biased region" description="Basic and acidic residues" evidence="3">
    <location>
        <begin position="496"/>
        <end position="510"/>
    </location>
</feature>
<feature type="compositionally biased region" description="Low complexity" evidence="3">
    <location>
        <begin position="518"/>
        <end position="527"/>
    </location>
</feature>
<feature type="sequence conflict" description="In Ref. 1; AAF27286." evidence="7" ref="1">
    <original>E</original>
    <variation>D</variation>
    <location>
        <position position="424"/>
    </location>
</feature>
<feature type="sequence conflict" description="In Ref. 1; AAF27286." evidence="7" ref="1">
    <original>S</original>
    <variation>A</variation>
    <location>
        <position position="430"/>
    </location>
</feature>
<feature type="sequence conflict" description="In Ref. 1; AAF27286." evidence="7" ref="1">
    <original>GQRPS</original>
    <variation>AQRPI</variation>
    <location>
        <begin position="454"/>
        <end position="458"/>
    </location>
</feature>
<dbReference type="EMBL" id="AF021243">
    <property type="protein sequence ID" value="AAC28254.1"/>
    <property type="molecule type" value="Genomic_DNA"/>
</dbReference>
<dbReference type="EMBL" id="AF136004">
    <property type="protein sequence ID" value="AAF27284.1"/>
    <property type="molecule type" value="mRNA"/>
</dbReference>
<dbReference type="EMBL" id="AF136006">
    <property type="protein sequence ID" value="AAF27286.1"/>
    <property type="molecule type" value="Genomic_DNA"/>
</dbReference>
<dbReference type="SMR" id="Q9AUJ7"/>
<dbReference type="MINT" id="Q9AUJ7"/>
<dbReference type="STRING" id="4565.Q9AUJ7"/>
<dbReference type="PaxDb" id="4565-Traes_2BL_89B629D3F.2"/>
<dbReference type="EnsemblPlants" id="TraesARI2D03G01233050.1">
    <property type="protein sequence ID" value="TraesARI2D03G01233050.1"/>
    <property type="gene ID" value="TraesARI2D03G01233050"/>
</dbReference>
<dbReference type="EnsemblPlants" id="TraesCAD_scaffold_012277_01G000100.1">
    <property type="protein sequence ID" value="TraesCAD_scaffold_012277_01G000100.1"/>
    <property type="gene ID" value="TraesCAD_scaffold_012277_01G000100"/>
</dbReference>
<dbReference type="EnsemblPlants" id="TraesCS2D02G337300.1">
    <property type="protein sequence ID" value="TraesCS2D02G337300.1"/>
    <property type="gene ID" value="TraesCS2D02G337300"/>
</dbReference>
<dbReference type="EnsemblPlants" id="TraesCS2D03G0773300.1">
    <property type="protein sequence ID" value="TraesCS2D03G0773300.1.CDS"/>
    <property type="gene ID" value="TraesCS2D03G0773300"/>
</dbReference>
<dbReference type="EnsemblPlants" id="TraesJAG2D03G01223020.1">
    <property type="protein sequence ID" value="TraesJAG2D03G01223020.1"/>
    <property type="gene ID" value="TraesJAG2D03G01223020"/>
</dbReference>
<dbReference type="EnsemblPlants" id="TraesJUL2D03G01223210.1">
    <property type="protein sequence ID" value="TraesJUL2D03G01223210.1"/>
    <property type="gene ID" value="TraesJUL2D03G01223210"/>
</dbReference>
<dbReference type="EnsemblPlants" id="TraesKAR2D01G0311820.1">
    <property type="protein sequence ID" value="cds.TraesKAR2D01G0311820.1"/>
    <property type="gene ID" value="TraesKAR2D01G0311820"/>
</dbReference>
<dbReference type="EnsemblPlants" id="TraesLAC2D03G01168390.1">
    <property type="protein sequence ID" value="TraesLAC2D03G01168390.1"/>
    <property type="gene ID" value="TraesLAC2D03G01168390"/>
</dbReference>
<dbReference type="EnsemblPlants" id="TraesLDM2D03G01217720.1">
    <property type="protein sequence ID" value="TraesLDM2D03G01217720.1"/>
    <property type="gene ID" value="TraesLDM2D03G01217720"/>
</dbReference>
<dbReference type="EnsemblPlants" id="TraesMAC2D03G01214820.1">
    <property type="protein sequence ID" value="TraesMAC2D03G01214820.1"/>
    <property type="gene ID" value="TraesMAC2D03G01214820"/>
</dbReference>
<dbReference type="EnsemblPlants" id="TraesNOR2D03G01233070.1">
    <property type="protein sequence ID" value="TraesNOR2D03G01233070.1"/>
    <property type="gene ID" value="TraesNOR2D03G01233070"/>
</dbReference>
<dbReference type="EnsemblPlants" id="TraesPARA_EIv1.0_0708910.1">
    <property type="protein sequence ID" value="TraesPARA_EIv1.0_0708910.1.CDS"/>
    <property type="gene ID" value="TraesPARA_EIv1.0_0708910"/>
</dbReference>
<dbReference type="EnsemblPlants" id="TraesRN2D0100819300.1">
    <property type="protein sequence ID" value="TraesRN2D0100819300.1"/>
    <property type="gene ID" value="TraesRN2D0100819300"/>
</dbReference>
<dbReference type="EnsemblPlants" id="TraesSTA2D03G01205580.1">
    <property type="protein sequence ID" value="TraesSTA2D03G01205580.1"/>
    <property type="gene ID" value="TraesSTA2D03G01205580"/>
</dbReference>
<dbReference type="EnsemblPlants" id="TraesSYM2D03G01232170.1">
    <property type="protein sequence ID" value="TraesSYM2D03G01232170.1"/>
    <property type="gene ID" value="TraesSYM2D03G01232170"/>
</dbReference>
<dbReference type="EnsemblPlants" id="TraesWEE_scaffold_004053_01G000100.1">
    <property type="protein sequence ID" value="TraesWEE_scaffold_004053_01G000100.1"/>
    <property type="gene ID" value="TraesWEE_scaffold_004053_01G000100"/>
</dbReference>
<dbReference type="Gramene" id="TraesARI2D03G01233050.1">
    <property type="protein sequence ID" value="TraesARI2D03G01233050.1"/>
    <property type="gene ID" value="TraesARI2D03G01233050"/>
</dbReference>
<dbReference type="Gramene" id="TraesCAD_scaffold_012277_01G000100.1">
    <property type="protein sequence ID" value="TraesCAD_scaffold_012277_01G000100.1"/>
    <property type="gene ID" value="TraesCAD_scaffold_012277_01G000100"/>
</dbReference>
<dbReference type="Gramene" id="TraesCS2D02G337300.1">
    <property type="protein sequence ID" value="TraesCS2D02G337300.1"/>
    <property type="gene ID" value="TraesCS2D02G337300"/>
</dbReference>
<dbReference type="Gramene" id="TraesCS2D03G0773300.1">
    <property type="protein sequence ID" value="TraesCS2D03G0773300.1.CDS"/>
    <property type="gene ID" value="TraesCS2D03G0773300"/>
</dbReference>
<dbReference type="Gramene" id="TraesJAG2D03G01223020.1">
    <property type="protein sequence ID" value="TraesJAG2D03G01223020.1"/>
    <property type="gene ID" value="TraesJAG2D03G01223020"/>
</dbReference>
<dbReference type="Gramene" id="TraesJUL2D03G01223210.1">
    <property type="protein sequence ID" value="TraesJUL2D03G01223210.1"/>
    <property type="gene ID" value="TraesJUL2D03G01223210"/>
</dbReference>
<dbReference type="Gramene" id="TraesKAR2D01G0311820.1">
    <property type="protein sequence ID" value="cds.TraesKAR2D01G0311820.1"/>
    <property type="gene ID" value="TraesKAR2D01G0311820"/>
</dbReference>
<dbReference type="Gramene" id="TraesLAC2D03G01168390.1">
    <property type="protein sequence ID" value="TraesLAC2D03G01168390.1"/>
    <property type="gene ID" value="TraesLAC2D03G01168390"/>
</dbReference>
<dbReference type="Gramene" id="TraesLDM2D03G01217720.1">
    <property type="protein sequence ID" value="TraesLDM2D03G01217720.1"/>
    <property type="gene ID" value="TraesLDM2D03G01217720"/>
</dbReference>
<dbReference type="Gramene" id="TraesMAC2D03G01214820.1">
    <property type="protein sequence ID" value="TraesMAC2D03G01214820.1"/>
    <property type="gene ID" value="TraesMAC2D03G01214820"/>
</dbReference>
<dbReference type="Gramene" id="TraesNOR2D03G01233070.1">
    <property type="protein sequence ID" value="TraesNOR2D03G01233070.1"/>
    <property type="gene ID" value="TraesNOR2D03G01233070"/>
</dbReference>
<dbReference type="Gramene" id="TraesPARA_EIv1.0_0708910.1">
    <property type="protein sequence ID" value="TraesPARA_EIv1.0_0708910.1.CDS"/>
    <property type="gene ID" value="TraesPARA_EIv1.0_0708910"/>
</dbReference>
<dbReference type="Gramene" id="TraesRN2D0100819300.1">
    <property type="protein sequence ID" value="TraesRN2D0100819300.1"/>
    <property type="gene ID" value="TraesRN2D0100819300"/>
</dbReference>
<dbReference type="Gramene" id="TraesSTA2D03G01205580.1">
    <property type="protein sequence ID" value="TraesSTA2D03G01205580.1"/>
    <property type="gene ID" value="TraesSTA2D03G01205580"/>
</dbReference>
<dbReference type="Gramene" id="TraesSYM2D03G01232170.1">
    <property type="protein sequence ID" value="TraesSYM2D03G01232170.1"/>
    <property type="gene ID" value="TraesSYM2D03G01232170"/>
</dbReference>
<dbReference type="Gramene" id="TraesWEE_scaffold_004053_01G000100.1">
    <property type="protein sequence ID" value="TraesWEE_scaffold_004053_01G000100.1"/>
    <property type="gene ID" value="TraesWEE_scaffold_004053_01G000100"/>
</dbReference>
<dbReference type="eggNOG" id="ENOG502QVPR">
    <property type="taxonomic scope" value="Eukaryota"/>
</dbReference>
<dbReference type="OMA" id="YGAQGQR"/>
<dbReference type="OrthoDB" id="2021148at2759"/>
<dbReference type="Proteomes" id="UP000019116">
    <property type="component" value="Chromosome 2D"/>
</dbReference>
<dbReference type="GO" id="GO:0005634">
    <property type="term" value="C:nucleus"/>
    <property type="evidence" value="ECO:0007669"/>
    <property type="project" value="UniProtKB-SubCell"/>
</dbReference>
<dbReference type="GO" id="GO:0003729">
    <property type="term" value="F:mRNA binding"/>
    <property type="evidence" value="ECO:0000318"/>
    <property type="project" value="GO_Central"/>
</dbReference>
<dbReference type="GO" id="GO:0042803">
    <property type="term" value="F:protein homodimerization activity"/>
    <property type="evidence" value="ECO:0000314"/>
    <property type="project" value="UniProtKB"/>
</dbReference>
<dbReference type="GO" id="GO:0003743">
    <property type="term" value="F:translation initiation factor activity"/>
    <property type="evidence" value="ECO:0000318"/>
    <property type="project" value="GO_Central"/>
</dbReference>
<dbReference type="InterPro" id="IPR010433">
    <property type="entry name" value="EIF-4B_pln"/>
</dbReference>
<dbReference type="PANTHER" id="PTHR32091">
    <property type="entry name" value="EUKARYOTIC TRANSLATION INITIATION FACTOR 4B"/>
    <property type="match status" value="1"/>
</dbReference>
<dbReference type="PANTHER" id="PTHR32091:SF20">
    <property type="entry name" value="EUKARYOTIC TRANSLATION INITIATION FACTOR 4B1"/>
    <property type="match status" value="1"/>
</dbReference>
<dbReference type="Pfam" id="PF06273">
    <property type="entry name" value="eIF-4B"/>
    <property type="match status" value="2"/>
</dbReference>
<keyword id="KW-0396">Initiation factor</keyword>
<keyword id="KW-0539">Nucleus</keyword>
<keyword id="KW-0597">Phosphoprotein</keyword>
<keyword id="KW-0648">Protein biosynthesis</keyword>
<keyword id="KW-1185">Reference proteome</keyword>
<name>IF4B1_WHEAT</name>
<protein>
    <recommendedName>
        <fullName evidence="6">Eukaryotic translation initiation factor 4B1</fullName>
        <shortName evidence="6">TaTif4B1</shortName>
        <shortName evidence="6">eIF4B</shortName>
    </recommendedName>
</protein>
<comment type="function">
    <text evidence="4 5">Promotes the eIF4F and eIF4A RNA-dependent ATP-hydrolysis activity with different efficiency depending on mRNAs, thus providing mRNA discrimination during initiation of translation.</text>
</comment>
<comment type="subunit">
    <text evidence="1 4 5">Homodimer (PubMed:10600500, PubMed:19493973). Nonspherical monomer. mRNA-discriminating component of initiation complexes (By similarity) (PubMed:19493973).</text>
</comment>
<comment type="subcellular location">
    <subcellularLocation>
        <location evidence="2">Nucleus</location>
    </subcellularLocation>
</comment>
<comment type="PTM">
    <text evidence="4">Phosphorylated.</text>
</comment>
<comment type="similarity">
    <text evidence="7">Belongs to the eIF-4 subunit B family.</text>
</comment>
<organism evidence="8">
    <name type="scientific">Triticum aestivum</name>
    <name type="common">Wheat</name>
    <dbReference type="NCBI Taxonomy" id="4565"/>
    <lineage>
        <taxon>Eukaryota</taxon>
        <taxon>Viridiplantae</taxon>
        <taxon>Streptophyta</taxon>
        <taxon>Embryophyta</taxon>
        <taxon>Tracheophyta</taxon>
        <taxon>Spermatophyta</taxon>
        <taxon>Magnoliopsida</taxon>
        <taxon>Liliopsida</taxon>
        <taxon>Poales</taxon>
        <taxon>Poaceae</taxon>
        <taxon>BOP clade</taxon>
        <taxon>Pooideae</taxon>
        <taxon>Triticodae</taxon>
        <taxon>Triticeae</taxon>
        <taxon>Triticinae</taxon>
        <taxon>Triticum</taxon>
    </lineage>
</organism>
<gene>
    <name evidence="6" type="primary">EIF4B</name>
</gene>
<evidence type="ECO:0000250" key="1">
    <source>
        <dbReference type="UniProtKB" id="Q9LIN5"/>
    </source>
</evidence>
<evidence type="ECO:0000255" key="2">
    <source>
        <dbReference type="PROSITE-ProRule" id="PRU00768"/>
    </source>
</evidence>
<evidence type="ECO:0000256" key="3">
    <source>
        <dbReference type="SAM" id="MobiDB-lite"/>
    </source>
</evidence>
<evidence type="ECO:0000269" key="4">
    <source>
    </source>
</evidence>
<evidence type="ECO:0000269" key="5">
    <source>
    </source>
</evidence>
<evidence type="ECO:0000303" key="6">
    <source>
    </source>
</evidence>
<evidence type="ECO:0000305" key="7"/>
<evidence type="ECO:0000312" key="8">
    <source>
        <dbReference type="EMBL" id="AAC28254.1"/>
    </source>
</evidence>
<accession>Q9AUJ7</accession>
<accession>Q9M7E9</accession>
<accession>Q9M7F1</accession>
<proteinExistence type="evidence at protein level"/>